<reference key="1">
    <citation type="submission" date="2008-07" db="EMBL/GenBank/DDBJ databases">
        <title>Complete sequence of Geobacter bemidjiensis BEM.</title>
        <authorList>
            <consortium name="US DOE Joint Genome Institute"/>
            <person name="Lucas S."/>
            <person name="Copeland A."/>
            <person name="Lapidus A."/>
            <person name="Glavina del Rio T."/>
            <person name="Dalin E."/>
            <person name="Tice H."/>
            <person name="Bruce D."/>
            <person name="Goodwin L."/>
            <person name="Pitluck S."/>
            <person name="Kiss H."/>
            <person name="Brettin T."/>
            <person name="Detter J.C."/>
            <person name="Han C."/>
            <person name="Kuske C.R."/>
            <person name="Schmutz J."/>
            <person name="Larimer F."/>
            <person name="Land M."/>
            <person name="Hauser L."/>
            <person name="Kyrpides N."/>
            <person name="Lykidis A."/>
            <person name="Lovley D."/>
            <person name="Richardson P."/>
        </authorList>
    </citation>
    <scope>NUCLEOTIDE SEQUENCE [LARGE SCALE GENOMIC DNA]</scope>
    <source>
        <strain>ATCC BAA-1014 / DSM 16622 / JCM 12645 / Bem</strain>
    </source>
</reference>
<gene>
    <name evidence="1" type="primary">lexA</name>
    <name type="ordered locus">Gbem_1758</name>
</gene>
<proteinExistence type="inferred from homology"/>
<protein>
    <recommendedName>
        <fullName evidence="1">LexA repressor</fullName>
        <ecNumber evidence="1">3.4.21.88</ecNumber>
    </recommendedName>
</protein>
<accession>B5EA68</accession>
<keyword id="KW-0068">Autocatalytic cleavage</keyword>
<keyword id="KW-0227">DNA damage</keyword>
<keyword id="KW-0234">DNA repair</keyword>
<keyword id="KW-0235">DNA replication</keyword>
<keyword id="KW-0238">DNA-binding</keyword>
<keyword id="KW-0378">Hydrolase</keyword>
<keyword id="KW-1185">Reference proteome</keyword>
<keyword id="KW-0678">Repressor</keyword>
<keyword id="KW-0742">SOS response</keyword>
<keyword id="KW-0804">Transcription</keyword>
<keyword id="KW-0805">Transcription regulation</keyword>
<feature type="chain" id="PRO_1000089568" description="LexA repressor">
    <location>
        <begin position="1"/>
        <end position="201"/>
    </location>
</feature>
<feature type="DNA-binding region" description="H-T-H motif" evidence="1">
    <location>
        <begin position="28"/>
        <end position="48"/>
    </location>
</feature>
<feature type="active site" description="For autocatalytic cleavage activity" evidence="1">
    <location>
        <position position="120"/>
    </location>
</feature>
<feature type="active site" description="For autocatalytic cleavage activity" evidence="1">
    <location>
        <position position="157"/>
    </location>
</feature>
<feature type="site" description="Cleavage; by autolysis" evidence="1">
    <location>
        <begin position="85"/>
        <end position="86"/>
    </location>
</feature>
<evidence type="ECO:0000255" key="1">
    <source>
        <dbReference type="HAMAP-Rule" id="MF_00015"/>
    </source>
</evidence>
<comment type="function">
    <text evidence="1">Represses a number of genes involved in the response to DNA damage (SOS response), including recA and lexA. In the presence of single-stranded DNA, RecA interacts with LexA causing an autocatalytic cleavage which disrupts the DNA-binding part of LexA, leading to derepression of the SOS regulon and eventually DNA repair.</text>
</comment>
<comment type="catalytic activity">
    <reaction evidence="1">
        <text>Hydrolysis of Ala-|-Gly bond in repressor LexA.</text>
        <dbReference type="EC" id="3.4.21.88"/>
    </reaction>
</comment>
<comment type="subunit">
    <text evidence="1">Homodimer.</text>
</comment>
<comment type="similarity">
    <text evidence="1">Belongs to the peptidase S24 family.</text>
</comment>
<sequence>MEQLTARQTEVLQIITRHLETCGYPPTLREIAAQLGISGTLGVMKHLEALEKKGYLRRQEGSTRGITLCNQSQAASLPIVGVVRAGLLHPAIQDIEGHFAIDRSQLASGGAFFLRVKGDSMVHAHIVEGDLALVRPQPHASNRDIVVAMVDGEATLKRFYREADRIRLQPENPNYEPIIIEKGEQEVSIVGKVVGIYRQME</sequence>
<name>LEXA_CITBB</name>
<organism>
    <name type="scientific">Citrifermentans bemidjiense (strain ATCC BAA-1014 / DSM 16622 / JCM 12645 / Bem)</name>
    <name type="common">Geobacter bemidjiensis</name>
    <dbReference type="NCBI Taxonomy" id="404380"/>
    <lineage>
        <taxon>Bacteria</taxon>
        <taxon>Pseudomonadati</taxon>
        <taxon>Thermodesulfobacteriota</taxon>
        <taxon>Desulfuromonadia</taxon>
        <taxon>Geobacterales</taxon>
        <taxon>Geobacteraceae</taxon>
        <taxon>Citrifermentans</taxon>
    </lineage>
</organism>
<dbReference type="EC" id="3.4.21.88" evidence="1"/>
<dbReference type="EMBL" id="CP001124">
    <property type="protein sequence ID" value="ACH38774.1"/>
    <property type="molecule type" value="Genomic_DNA"/>
</dbReference>
<dbReference type="RefSeq" id="WP_012530192.1">
    <property type="nucleotide sequence ID" value="NC_011146.1"/>
</dbReference>
<dbReference type="SMR" id="B5EA68"/>
<dbReference type="STRING" id="404380.Gbem_1758"/>
<dbReference type="MEROPS" id="S24.001"/>
<dbReference type="KEGG" id="gbm:Gbem_1758"/>
<dbReference type="eggNOG" id="COG1974">
    <property type="taxonomic scope" value="Bacteria"/>
</dbReference>
<dbReference type="HOGENOM" id="CLU_066192_45_1_7"/>
<dbReference type="OrthoDB" id="9802364at2"/>
<dbReference type="Proteomes" id="UP000008825">
    <property type="component" value="Chromosome"/>
</dbReference>
<dbReference type="GO" id="GO:0003677">
    <property type="term" value="F:DNA binding"/>
    <property type="evidence" value="ECO:0007669"/>
    <property type="project" value="UniProtKB-UniRule"/>
</dbReference>
<dbReference type="GO" id="GO:0004252">
    <property type="term" value="F:serine-type endopeptidase activity"/>
    <property type="evidence" value="ECO:0007669"/>
    <property type="project" value="UniProtKB-UniRule"/>
</dbReference>
<dbReference type="GO" id="GO:0006281">
    <property type="term" value="P:DNA repair"/>
    <property type="evidence" value="ECO:0007669"/>
    <property type="project" value="UniProtKB-UniRule"/>
</dbReference>
<dbReference type="GO" id="GO:0006260">
    <property type="term" value="P:DNA replication"/>
    <property type="evidence" value="ECO:0007669"/>
    <property type="project" value="UniProtKB-UniRule"/>
</dbReference>
<dbReference type="GO" id="GO:0045892">
    <property type="term" value="P:negative regulation of DNA-templated transcription"/>
    <property type="evidence" value="ECO:0007669"/>
    <property type="project" value="UniProtKB-UniRule"/>
</dbReference>
<dbReference type="GO" id="GO:0006508">
    <property type="term" value="P:proteolysis"/>
    <property type="evidence" value="ECO:0007669"/>
    <property type="project" value="InterPro"/>
</dbReference>
<dbReference type="GO" id="GO:0009432">
    <property type="term" value="P:SOS response"/>
    <property type="evidence" value="ECO:0007669"/>
    <property type="project" value="UniProtKB-UniRule"/>
</dbReference>
<dbReference type="CDD" id="cd06529">
    <property type="entry name" value="S24_LexA-like"/>
    <property type="match status" value="1"/>
</dbReference>
<dbReference type="FunFam" id="1.10.10.10:FF:000009">
    <property type="entry name" value="LexA repressor"/>
    <property type="match status" value="1"/>
</dbReference>
<dbReference type="FunFam" id="2.10.109.10:FF:000001">
    <property type="entry name" value="LexA repressor"/>
    <property type="match status" value="1"/>
</dbReference>
<dbReference type="Gene3D" id="2.10.109.10">
    <property type="entry name" value="Umud Fragment, subunit A"/>
    <property type="match status" value="1"/>
</dbReference>
<dbReference type="Gene3D" id="1.10.10.10">
    <property type="entry name" value="Winged helix-like DNA-binding domain superfamily/Winged helix DNA-binding domain"/>
    <property type="match status" value="1"/>
</dbReference>
<dbReference type="HAMAP" id="MF_00015">
    <property type="entry name" value="LexA"/>
    <property type="match status" value="1"/>
</dbReference>
<dbReference type="InterPro" id="IPR006200">
    <property type="entry name" value="LexA"/>
</dbReference>
<dbReference type="InterPro" id="IPR039418">
    <property type="entry name" value="LexA-like"/>
</dbReference>
<dbReference type="InterPro" id="IPR036286">
    <property type="entry name" value="LexA/Signal_pep-like_sf"/>
</dbReference>
<dbReference type="InterPro" id="IPR006199">
    <property type="entry name" value="LexA_DNA-bd_dom"/>
</dbReference>
<dbReference type="InterPro" id="IPR050077">
    <property type="entry name" value="LexA_repressor"/>
</dbReference>
<dbReference type="InterPro" id="IPR006197">
    <property type="entry name" value="Peptidase_S24_LexA"/>
</dbReference>
<dbReference type="InterPro" id="IPR015927">
    <property type="entry name" value="Peptidase_S24_S26A/B/C"/>
</dbReference>
<dbReference type="InterPro" id="IPR036388">
    <property type="entry name" value="WH-like_DNA-bd_sf"/>
</dbReference>
<dbReference type="InterPro" id="IPR036390">
    <property type="entry name" value="WH_DNA-bd_sf"/>
</dbReference>
<dbReference type="NCBIfam" id="TIGR00498">
    <property type="entry name" value="lexA"/>
    <property type="match status" value="1"/>
</dbReference>
<dbReference type="PANTHER" id="PTHR33516">
    <property type="entry name" value="LEXA REPRESSOR"/>
    <property type="match status" value="1"/>
</dbReference>
<dbReference type="PANTHER" id="PTHR33516:SF2">
    <property type="entry name" value="LEXA REPRESSOR-RELATED"/>
    <property type="match status" value="1"/>
</dbReference>
<dbReference type="Pfam" id="PF01726">
    <property type="entry name" value="LexA_DNA_bind"/>
    <property type="match status" value="1"/>
</dbReference>
<dbReference type="Pfam" id="PF00717">
    <property type="entry name" value="Peptidase_S24"/>
    <property type="match status" value="1"/>
</dbReference>
<dbReference type="PRINTS" id="PR00726">
    <property type="entry name" value="LEXASERPTASE"/>
</dbReference>
<dbReference type="SUPFAM" id="SSF51306">
    <property type="entry name" value="LexA/Signal peptidase"/>
    <property type="match status" value="1"/>
</dbReference>
<dbReference type="SUPFAM" id="SSF46785">
    <property type="entry name" value="Winged helix' DNA-binding domain"/>
    <property type="match status" value="1"/>
</dbReference>